<reference key="1">
    <citation type="submission" date="2006-08" db="EMBL/GenBank/DDBJ databases">
        <title>Complete sequence of Alkalilimnicola ehrilichei MLHE-1.</title>
        <authorList>
            <person name="Copeland A."/>
            <person name="Lucas S."/>
            <person name="Lapidus A."/>
            <person name="Barry K."/>
            <person name="Detter J.C."/>
            <person name="Glavina del Rio T."/>
            <person name="Hammon N."/>
            <person name="Israni S."/>
            <person name="Dalin E."/>
            <person name="Tice H."/>
            <person name="Pitluck S."/>
            <person name="Sims D."/>
            <person name="Brettin T."/>
            <person name="Bruce D."/>
            <person name="Han C."/>
            <person name="Tapia R."/>
            <person name="Gilna P."/>
            <person name="Schmutz J."/>
            <person name="Larimer F."/>
            <person name="Land M."/>
            <person name="Hauser L."/>
            <person name="Kyrpides N."/>
            <person name="Mikhailova N."/>
            <person name="Oremland R.S."/>
            <person name="Hoeft S.E."/>
            <person name="Switzer-Blum J."/>
            <person name="Kulp T."/>
            <person name="King G."/>
            <person name="Tabita R."/>
            <person name="Witte B."/>
            <person name="Santini J.M."/>
            <person name="Basu P."/>
            <person name="Hollibaugh J.T."/>
            <person name="Xie G."/>
            <person name="Stolz J.F."/>
            <person name="Richardson P."/>
        </authorList>
    </citation>
    <scope>NUCLEOTIDE SEQUENCE [LARGE SCALE GENOMIC DNA]</scope>
    <source>
        <strain>ATCC BAA-1101 / DSM 17681 / MLHE-1</strain>
    </source>
</reference>
<evidence type="ECO:0000255" key="1">
    <source>
        <dbReference type="HAMAP-Rule" id="MF_01008"/>
    </source>
</evidence>
<evidence type="ECO:0000255" key="2">
    <source>
        <dbReference type="PROSITE-ProRule" id="PRU01076"/>
    </source>
</evidence>
<dbReference type="EMBL" id="CP000453">
    <property type="protein sequence ID" value="ABI57544.1"/>
    <property type="molecule type" value="Genomic_DNA"/>
</dbReference>
<dbReference type="RefSeq" id="WP_011629938.1">
    <property type="nucleotide sequence ID" value="NC_008340.1"/>
</dbReference>
<dbReference type="SMR" id="Q0A6J3"/>
<dbReference type="KEGG" id="aeh:Mlg_2202"/>
<dbReference type="eggNOG" id="COG2001">
    <property type="taxonomic scope" value="Bacteria"/>
</dbReference>
<dbReference type="HOGENOM" id="CLU_107907_2_0_6"/>
<dbReference type="OrthoDB" id="9807753at2"/>
<dbReference type="Proteomes" id="UP000001962">
    <property type="component" value="Chromosome"/>
</dbReference>
<dbReference type="GO" id="GO:0005737">
    <property type="term" value="C:cytoplasm"/>
    <property type="evidence" value="ECO:0007669"/>
    <property type="project" value="UniProtKB-UniRule"/>
</dbReference>
<dbReference type="GO" id="GO:0009295">
    <property type="term" value="C:nucleoid"/>
    <property type="evidence" value="ECO:0007669"/>
    <property type="project" value="UniProtKB-SubCell"/>
</dbReference>
<dbReference type="GO" id="GO:0003700">
    <property type="term" value="F:DNA-binding transcription factor activity"/>
    <property type="evidence" value="ECO:0007669"/>
    <property type="project" value="UniProtKB-UniRule"/>
</dbReference>
<dbReference type="GO" id="GO:0000976">
    <property type="term" value="F:transcription cis-regulatory region binding"/>
    <property type="evidence" value="ECO:0007669"/>
    <property type="project" value="TreeGrafter"/>
</dbReference>
<dbReference type="GO" id="GO:2000143">
    <property type="term" value="P:negative regulation of DNA-templated transcription initiation"/>
    <property type="evidence" value="ECO:0007669"/>
    <property type="project" value="TreeGrafter"/>
</dbReference>
<dbReference type="CDD" id="cd16321">
    <property type="entry name" value="MraZ_C"/>
    <property type="match status" value="1"/>
</dbReference>
<dbReference type="CDD" id="cd16320">
    <property type="entry name" value="MraZ_N"/>
    <property type="match status" value="1"/>
</dbReference>
<dbReference type="Gene3D" id="3.40.1550.20">
    <property type="entry name" value="Transcriptional regulator MraZ domain"/>
    <property type="match status" value="1"/>
</dbReference>
<dbReference type="HAMAP" id="MF_01008">
    <property type="entry name" value="MraZ"/>
    <property type="match status" value="1"/>
</dbReference>
<dbReference type="InterPro" id="IPR003444">
    <property type="entry name" value="MraZ"/>
</dbReference>
<dbReference type="InterPro" id="IPR035644">
    <property type="entry name" value="MraZ_C"/>
</dbReference>
<dbReference type="InterPro" id="IPR020603">
    <property type="entry name" value="MraZ_dom"/>
</dbReference>
<dbReference type="InterPro" id="IPR035642">
    <property type="entry name" value="MraZ_N"/>
</dbReference>
<dbReference type="InterPro" id="IPR038619">
    <property type="entry name" value="MraZ_sf"/>
</dbReference>
<dbReference type="InterPro" id="IPR007159">
    <property type="entry name" value="SpoVT-AbrB_dom"/>
</dbReference>
<dbReference type="InterPro" id="IPR037914">
    <property type="entry name" value="SpoVT-AbrB_sf"/>
</dbReference>
<dbReference type="NCBIfam" id="TIGR00242">
    <property type="entry name" value="division/cell wall cluster transcriptional repressor MraZ"/>
    <property type="match status" value="1"/>
</dbReference>
<dbReference type="PANTHER" id="PTHR34701">
    <property type="entry name" value="TRANSCRIPTIONAL REGULATOR MRAZ"/>
    <property type="match status" value="1"/>
</dbReference>
<dbReference type="PANTHER" id="PTHR34701:SF1">
    <property type="entry name" value="TRANSCRIPTIONAL REGULATOR MRAZ"/>
    <property type="match status" value="1"/>
</dbReference>
<dbReference type="Pfam" id="PF02381">
    <property type="entry name" value="MraZ"/>
    <property type="match status" value="2"/>
</dbReference>
<dbReference type="SUPFAM" id="SSF89447">
    <property type="entry name" value="AbrB/MazE/MraZ-like"/>
    <property type="match status" value="1"/>
</dbReference>
<dbReference type="PROSITE" id="PS51740">
    <property type="entry name" value="SPOVT_ABRB"/>
    <property type="match status" value="2"/>
</dbReference>
<proteinExistence type="inferred from homology"/>
<gene>
    <name evidence="1" type="primary">mraZ</name>
    <name type="ordered locus">Mlg_2202</name>
</gene>
<name>MRAZ_ALKEH</name>
<feature type="chain" id="PRO_1000062841" description="Transcriptional regulator MraZ">
    <location>
        <begin position="1"/>
        <end position="150"/>
    </location>
</feature>
<feature type="domain" description="SpoVT-AbrB 1" evidence="2">
    <location>
        <begin position="5"/>
        <end position="52"/>
    </location>
</feature>
<feature type="domain" description="SpoVT-AbrB 2" evidence="2">
    <location>
        <begin position="81"/>
        <end position="124"/>
    </location>
</feature>
<sequence>MFRGVTHLNLDAKGRMAFPSRYRDRLMGLCDGEVVATIDYESPCLMLYPLPDWEVLERDLVKLPSLNPQARRLQRLLIGHAHDLQLDGSGRVLLPQPLRDYANLDKKIVLVGQVHRFELWDAEAWEQARTDWLDEARQDGVPDELGSLTL</sequence>
<protein>
    <recommendedName>
        <fullName>Transcriptional regulator MraZ</fullName>
    </recommendedName>
</protein>
<organism>
    <name type="scientific">Alkalilimnicola ehrlichii (strain ATCC BAA-1101 / DSM 17681 / MLHE-1)</name>
    <dbReference type="NCBI Taxonomy" id="187272"/>
    <lineage>
        <taxon>Bacteria</taxon>
        <taxon>Pseudomonadati</taxon>
        <taxon>Pseudomonadota</taxon>
        <taxon>Gammaproteobacteria</taxon>
        <taxon>Chromatiales</taxon>
        <taxon>Ectothiorhodospiraceae</taxon>
        <taxon>Alkalilimnicola</taxon>
    </lineage>
</organism>
<comment type="subunit">
    <text evidence="1">Forms oligomers.</text>
</comment>
<comment type="subcellular location">
    <subcellularLocation>
        <location evidence="1">Cytoplasm</location>
        <location evidence="1">Nucleoid</location>
    </subcellularLocation>
</comment>
<comment type="similarity">
    <text evidence="1">Belongs to the MraZ family.</text>
</comment>
<accession>Q0A6J3</accession>
<keyword id="KW-0963">Cytoplasm</keyword>
<keyword id="KW-0238">DNA-binding</keyword>
<keyword id="KW-1185">Reference proteome</keyword>
<keyword id="KW-0677">Repeat</keyword>
<keyword id="KW-0804">Transcription</keyword>
<keyword id="KW-0805">Transcription regulation</keyword>